<comment type="function">
    <text evidence="2">Client-loading PAQosome/R2TP complex cofactor that selects NOP58 to promote box C/D small nucleolar ribonucleoprotein (snoRNP) assembly. Acts as a bridge between NOP58 and the R2TP complex via RUVBL1:RUVBL2.</text>
</comment>
<comment type="subunit">
    <text evidence="2">Interacts with NOP58, RUVBL1 and RUVBL2; the interactions are direct and NOPCHAP1 bridges the association of NOP58 with RUVBL1:RUVBL2 even in absence of snoRNAs. The interactions with RUVBL1 and RUVBL2 are disrupted upon ATP binding.</text>
</comment>
<comment type="interaction">
    <interactant intactId="EBI-3916179">
        <id>Q8N5I9</id>
    </interactant>
    <interactant intactId="EBI-395469">
        <id>Q9Y2X3</id>
        <label>NOP58</label>
    </interactant>
    <organismsDiffer>false</organismsDiffer>
    <experiments>2</experiments>
</comment>
<comment type="subcellular location">
    <subcellularLocation>
        <location evidence="4">Nucleus</location>
    </subcellularLocation>
</comment>
<comment type="sequence caution" evidence="3">
    <conflict type="frameshift">
        <sequence resource="EMBL-CDS" id="AAH32326"/>
    </conflict>
</comment>
<proteinExistence type="evidence at protein level"/>
<gene>
    <name evidence="5" type="primary">NOPCHAP1</name>
    <name type="synonym">C12orf45</name>
</gene>
<sequence>MEVHGKPKASPSCSSPTRDSSGVPVSKELLTAGSDGRGGIWDRLLINSQPKSRKTSTLQTVRIERSPLLDQVQTFLPQMARANEKLRKEMAAAPPGRFNIENIDGPHSKVIQMDVALFEMNQSDSKEVDSSEESSQDSSENSSESEDEDDSIPSEVTIDNIKLPNSEGGKGKIEVLDSPASKKKK</sequence>
<feature type="chain" id="PRO_0000263623" description="NOP protein chaperone 1">
    <location>
        <begin position="1"/>
        <end position="185"/>
    </location>
</feature>
<feature type="region of interest" description="Disordered" evidence="1">
    <location>
        <begin position="1"/>
        <end position="40"/>
    </location>
</feature>
<feature type="region of interest" description="Disordered" evidence="1">
    <location>
        <begin position="118"/>
        <end position="185"/>
    </location>
</feature>
<feature type="compositionally biased region" description="Low complexity" evidence="1">
    <location>
        <begin position="10"/>
        <end position="21"/>
    </location>
</feature>
<feature type="compositionally biased region" description="Acidic residues" evidence="1">
    <location>
        <begin position="143"/>
        <end position="152"/>
    </location>
</feature>
<feature type="modified residue" description="Phosphoserine" evidence="7">
    <location>
        <position position="34"/>
    </location>
</feature>
<feature type="modified residue" description="Phosphoserine" evidence="6 7">
    <location>
        <position position="66"/>
    </location>
</feature>
<feature type="modified residue" description="Phosphoserine" evidence="7 8 9 10 11">
    <location>
        <position position="178"/>
    </location>
</feature>
<feature type="sequence variant" id="VAR_056833" description="In dbSNP:rs12580271.">
    <original>G</original>
    <variation>S</variation>
    <location>
        <position position="5"/>
    </location>
</feature>
<feature type="sequence variant" id="VAR_060438" description="In dbSNP:rs1129593.">
    <original>K</original>
    <variation>Q</variation>
    <location>
        <position position="8"/>
    </location>
</feature>
<evidence type="ECO:0000256" key="1">
    <source>
        <dbReference type="SAM" id="MobiDB-lite"/>
    </source>
</evidence>
<evidence type="ECO:0000269" key="2">
    <source>
    </source>
</evidence>
<evidence type="ECO:0000305" key="3"/>
<evidence type="ECO:0000305" key="4">
    <source>
    </source>
</evidence>
<evidence type="ECO:0000312" key="5">
    <source>
        <dbReference type="HGNC" id="HGNC:28628"/>
    </source>
</evidence>
<evidence type="ECO:0007744" key="6">
    <source>
    </source>
</evidence>
<evidence type="ECO:0007744" key="7">
    <source>
    </source>
</evidence>
<evidence type="ECO:0007744" key="8">
    <source>
    </source>
</evidence>
<evidence type="ECO:0007744" key="9">
    <source>
    </source>
</evidence>
<evidence type="ECO:0007744" key="10">
    <source>
    </source>
</evidence>
<evidence type="ECO:0007744" key="11">
    <source>
    </source>
</evidence>
<reference key="1">
    <citation type="journal article" date="2006" name="Nature">
        <title>The finished DNA sequence of human chromosome 12.</title>
        <authorList>
            <person name="Scherer S.E."/>
            <person name="Muzny D.M."/>
            <person name="Buhay C.J."/>
            <person name="Chen R."/>
            <person name="Cree A."/>
            <person name="Ding Y."/>
            <person name="Dugan-Rocha S."/>
            <person name="Gill R."/>
            <person name="Gunaratne P."/>
            <person name="Harris R.A."/>
            <person name="Hawes A.C."/>
            <person name="Hernandez J."/>
            <person name="Hodgson A.V."/>
            <person name="Hume J."/>
            <person name="Jackson A."/>
            <person name="Khan Z.M."/>
            <person name="Kovar-Smith C."/>
            <person name="Lewis L.R."/>
            <person name="Lozado R.J."/>
            <person name="Metzker M.L."/>
            <person name="Milosavljevic A."/>
            <person name="Miner G.R."/>
            <person name="Montgomery K.T."/>
            <person name="Morgan M.B."/>
            <person name="Nazareth L.V."/>
            <person name="Scott G."/>
            <person name="Sodergren E."/>
            <person name="Song X.-Z."/>
            <person name="Steffen D."/>
            <person name="Lovering R.C."/>
            <person name="Wheeler D.A."/>
            <person name="Worley K.C."/>
            <person name="Yuan Y."/>
            <person name="Zhang Z."/>
            <person name="Adams C.Q."/>
            <person name="Ansari-Lari M.A."/>
            <person name="Ayele M."/>
            <person name="Brown M.J."/>
            <person name="Chen G."/>
            <person name="Chen Z."/>
            <person name="Clerc-Blankenburg K.P."/>
            <person name="Davis C."/>
            <person name="Delgado O."/>
            <person name="Dinh H.H."/>
            <person name="Draper H."/>
            <person name="Gonzalez-Garay M.L."/>
            <person name="Havlak P."/>
            <person name="Jackson L.R."/>
            <person name="Jacob L.S."/>
            <person name="Kelly S.H."/>
            <person name="Li L."/>
            <person name="Li Z."/>
            <person name="Liu J."/>
            <person name="Liu W."/>
            <person name="Lu J."/>
            <person name="Maheshwari M."/>
            <person name="Nguyen B.-V."/>
            <person name="Okwuonu G.O."/>
            <person name="Pasternak S."/>
            <person name="Perez L.M."/>
            <person name="Plopper F.J.H."/>
            <person name="Santibanez J."/>
            <person name="Shen H."/>
            <person name="Tabor P.E."/>
            <person name="Verduzco D."/>
            <person name="Waldron L."/>
            <person name="Wang Q."/>
            <person name="Williams G.A."/>
            <person name="Zhang J."/>
            <person name="Zhou J."/>
            <person name="Allen C.C."/>
            <person name="Amin A.G."/>
            <person name="Anyalebechi V."/>
            <person name="Bailey M."/>
            <person name="Barbaria J.A."/>
            <person name="Bimage K.E."/>
            <person name="Bryant N.P."/>
            <person name="Burch P.E."/>
            <person name="Burkett C.E."/>
            <person name="Burrell K.L."/>
            <person name="Calderon E."/>
            <person name="Cardenas V."/>
            <person name="Carter K."/>
            <person name="Casias K."/>
            <person name="Cavazos I."/>
            <person name="Cavazos S.R."/>
            <person name="Ceasar H."/>
            <person name="Chacko J."/>
            <person name="Chan S.N."/>
            <person name="Chavez D."/>
            <person name="Christopoulos C."/>
            <person name="Chu J."/>
            <person name="Cockrell R."/>
            <person name="Cox C.D."/>
            <person name="Dang M."/>
            <person name="Dathorne S.R."/>
            <person name="David R."/>
            <person name="Davis C.M."/>
            <person name="Davy-Carroll L."/>
            <person name="Deshazo D.R."/>
            <person name="Donlin J.E."/>
            <person name="D'Souza L."/>
            <person name="Eaves K.A."/>
            <person name="Egan A."/>
            <person name="Emery-Cohen A.J."/>
            <person name="Escotto M."/>
            <person name="Flagg N."/>
            <person name="Forbes L.D."/>
            <person name="Gabisi A.M."/>
            <person name="Garza M."/>
            <person name="Hamilton C."/>
            <person name="Henderson N."/>
            <person name="Hernandez O."/>
            <person name="Hines S."/>
            <person name="Hogues M.E."/>
            <person name="Huang M."/>
            <person name="Idlebird D.G."/>
            <person name="Johnson R."/>
            <person name="Jolivet A."/>
            <person name="Jones S."/>
            <person name="Kagan R."/>
            <person name="King L.M."/>
            <person name="Leal B."/>
            <person name="Lebow H."/>
            <person name="Lee S."/>
            <person name="LeVan J.M."/>
            <person name="Lewis L.C."/>
            <person name="London P."/>
            <person name="Lorensuhewa L.M."/>
            <person name="Loulseged H."/>
            <person name="Lovett D.A."/>
            <person name="Lucier A."/>
            <person name="Lucier R.L."/>
            <person name="Ma J."/>
            <person name="Madu R.C."/>
            <person name="Mapua P."/>
            <person name="Martindale A.D."/>
            <person name="Martinez E."/>
            <person name="Massey E."/>
            <person name="Mawhiney S."/>
            <person name="Meador M.G."/>
            <person name="Mendez S."/>
            <person name="Mercado C."/>
            <person name="Mercado I.C."/>
            <person name="Merritt C.E."/>
            <person name="Miner Z.L."/>
            <person name="Minja E."/>
            <person name="Mitchell T."/>
            <person name="Mohabbat F."/>
            <person name="Mohabbat K."/>
            <person name="Montgomery B."/>
            <person name="Moore N."/>
            <person name="Morris S."/>
            <person name="Munidasa M."/>
            <person name="Ngo R.N."/>
            <person name="Nguyen N.B."/>
            <person name="Nickerson E."/>
            <person name="Nwaokelemeh O.O."/>
            <person name="Nwokenkwo S."/>
            <person name="Obregon M."/>
            <person name="Oguh M."/>
            <person name="Oragunye N."/>
            <person name="Oviedo R.J."/>
            <person name="Parish B.J."/>
            <person name="Parker D.N."/>
            <person name="Parrish J."/>
            <person name="Parks K.L."/>
            <person name="Paul H.A."/>
            <person name="Payton B.A."/>
            <person name="Perez A."/>
            <person name="Perrin W."/>
            <person name="Pickens A."/>
            <person name="Primus E.L."/>
            <person name="Pu L.-L."/>
            <person name="Puazo M."/>
            <person name="Quiles M.M."/>
            <person name="Quiroz J.B."/>
            <person name="Rabata D."/>
            <person name="Reeves K."/>
            <person name="Ruiz S.J."/>
            <person name="Shao H."/>
            <person name="Sisson I."/>
            <person name="Sonaike T."/>
            <person name="Sorelle R.P."/>
            <person name="Sutton A.E."/>
            <person name="Svatek A.F."/>
            <person name="Svetz L.A."/>
            <person name="Tamerisa K.S."/>
            <person name="Taylor T.R."/>
            <person name="Teague B."/>
            <person name="Thomas N."/>
            <person name="Thorn R.D."/>
            <person name="Trejos Z.Y."/>
            <person name="Trevino B.K."/>
            <person name="Ukegbu O.N."/>
            <person name="Urban J.B."/>
            <person name="Vasquez L.I."/>
            <person name="Vera V.A."/>
            <person name="Villasana D.M."/>
            <person name="Wang L."/>
            <person name="Ward-Moore S."/>
            <person name="Warren J.T."/>
            <person name="Wei X."/>
            <person name="White F."/>
            <person name="Williamson A.L."/>
            <person name="Wleczyk R."/>
            <person name="Wooden H.S."/>
            <person name="Wooden S.H."/>
            <person name="Yen J."/>
            <person name="Yoon L."/>
            <person name="Yoon V."/>
            <person name="Zorrilla S.E."/>
            <person name="Nelson D."/>
            <person name="Kucherlapati R."/>
            <person name="Weinstock G."/>
            <person name="Gibbs R.A."/>
        </authorList>
    </citation>
    <scope>NUCLEOTIDE SEQUENCE [LARGE SCALE GENOMIC DNA]</scope>
</reference>
<reference key="2">
    <citation type="journal article" date="2004" name="Genome Res.">
        <title>The status, quality, and expansion of the NIH full-length cDNA project: the Mammalian Gene Collection (MGC).</title>
        <authorList>
            <consortium name="The MGC Project Team"/>
        </authorList>
    </citation>
    <scope>NUCLEOTIDE SEQUENCE [LARGE SCALE MRNA]</scope>
    <source>
        <tissue>Lymph</tissue>
    </source>
</reference>
<reference key="3">
    <citation type="journal article" date="2008" name="J. Proteome Res.">
        <title>Combining protein-based IMAC, peptide-based IMAC, and MudPIT for efficient phosphoproteomic analysis.</title>
        <authorList>
            <person name="Cantin G.T."/>
            <person name="Yi W."/>
            <person name="Lu B."/>
            <person name="Park S.K."/>
            <person name="Xu T."/>
            <person name="Lee J.-D."/>
            <person name="Yates J.R. III"/>
        </authorList>
    </citation>
    <scope>PHOSPHORYLATION [LARGE SCALE ANALYSIS] AT SER-66</scope>
    <scope>IDENTIFICATION BY MASS SPECTROMETRY [LARGE SCALE ANALYSIS]</scope>
    <source>
        <tissue>Cervix carcinoma</tissue>
    </source>
</reference>
<reference key="4">
    <citation type="journal article" date="2008" name="Proc. Natl. Acad. Sci. U.S.A.">
        <title>A quantitative atlas of mitotic phosphorylation.</title>
        <authorList>
            <person name="Dephoure N."/>
            <person name="Zhou C."/>
            <person name="Villen J."/>
            <person name="Beausoleil S.A."/>
            <person name="Bakalarski C.E."/>
            <person name="Elledge S.J."/>
            <person name="Gygi S.P."/>
        </authorList>
    </citation>
    <scope>PHOSPHORYLATION [LARGE SCALE ANALYSIS] AT SER-34; SER-66 AND SER-178</scope>
    <scope>IDENTIFICATION BY MASS SPECTROMETRY [LARGE SCALE ANALYSIS]</scope>
    <source>
        <tissue>Cervix carcinoma</tissue>
    </source>
</reference>
<reference key="5">
    <citation type="journal article" date="2009" name="Anal. Chem.">
        <title>Lys-N and trypsin cover complementary parts of the phosphoproteome in a refined SCX-based approach.</title>
        <authorList>
            <person name="Gauci S."/>
            <person name="Helbig A.O."/>
            <person name="Slijper M."/>
            <person name="Krijgsveld J."/>
            <person name="Heck A.J."/>
            <person name="Mohammed S."/>
        </authorList>
    </citation>
    <scope>IDENTIFICATION BY MASS SPECTROMETRY [LARGE SCALE ANALYSIS]</scope>
</reference>
<reference key="6">
    <citation type="journal article" date="2009" name="Sci. Signal.">
        <title>Quantitative phosphoproteomic analysis of T cell receptor signaling reveals system-wide modulation of protein-protein interactions.</title>
        <authorList>
            <person name="Mayya V."/>
            <person name="Lundgren D.H."/>
            <person name="Hwang S.-I."/>
            <person name="Rezaul K."/>
            <person name="Wu L."/>
            <person name="Eng J.K."/>
            <person name="Rodionov V."/>
            <person name="Han D.K."/>
        </authorList>
    </citation>
    <scope>PHOSPHORYLATION [LARGE SCALE ANALYSIS] AT SER-178</scope>
    <scope>IDENTIFICATION BY MASS SPECTROMETRY [LARGE SCALE ANALYSIS]</scope>
    <source>
        <tissue>Leukemic T-cell</tissue>
    </source>
</reference>
<reference key="7">
    <citation type="journal article" date="2010" name="Sci. Signal.">
        <title>Quantitative phosphoproteomics reveals widespread full phosphorylation site occupancy during mitosis.</title>
        <authorList>
            <person name="Olsen J.V."/>
            <person name="Vermeulen M."/>
            <person name="Santamaria A."/>
            <person name="Kumar C."/>
            <person name="Miller M.L."/>
            <person name="Jensen L.J."/>
            <person name="Gnad F."/>
            <person name="Cox J."/>
            <person name="Jensen T.S."/>
            <person name="Nigg E.A."/>
            <person name="Brunak S."/>
            <person name="Mann M."/>
        </authorList>
    </citation>
    <scope>PHOSPHORYLATION [LARGE SCALE ANALYSIS] AT SER-178</scope>
    <scope>IDENTIFICATION BY MASS SPECTROMETRY [LARGE SCALE ANALYSIS]</scope>
    <source>
        <tissue>Cervix carcinoma</tissue>
    </source>
</reference>
<reference key="8">
    <citation type="journal article" date="2011" name="BMC Syst. Biol.">
        <title>Initial characterization of the human central proteome.</title>
        <authorList>
            <person name="Burkard T.R."/>
            <person name="Planyavsky M."/>
            <person name="Kaupe I."/>
            <person name="Breitwieser F.P."/>
            <person name="Buerckstuemmer T."/>
            <person name="Bennett K.L."/>
            <person name="Superti-Furga G."/>
            <person name="Colinge J."/>
        </authorList>
    </citation>
    <scope>IDENTIFICATION BY MASS SPECTROMETRY [LARGE SCALE ANALYSIS]</scope>
</reference>
<reference key="9">
    <citation type="journal article" date="2011" name="Sci. Signal.">
        <title>System-wide temporal characterization of the proteome and phosphoproteome of human embryonic stem cell differentiation.</title>
        <authorList>
            <person name="Rigbolt K.T."/>
            <person name="Prokhorova T.A."/>
            <person name="Akimov V."/>
            <person name="Henningsen J."/>
            <person name="Johansen P.T."/>
            <person name="Kratchmarova I."/>
            <person name="Kassem M."/>
            <person name="Mann M."/>
            <person name="Olsen J.V."/>
            <person name="Blagoev B."/>
        </authorList>
    </citation>
    <scope>PHOSPHORYLATION [LARGE SCALE ANALYSIS] AT SER-178</scope>
    <scope>IDENTIFICATION BY MASS SPECTROMETRY [LARGE SCALE ANALYSIS]</scope>
</reference>
<reference key="10">
    <citation type="journal article" date="2013" name="J. Proteome Res.">
        <title>Toward a comprehensive characterization of a human cancer cell phosphoproteome.</title>
        <authorList>
            <person name="Zhou H."/>
            <person name="Di Palma S."/>
            <person name="Preisinger C."/>
            <person name="Peng M."/>
            <person name="Polat A.N."/>
            <person name="Heck A.J."/>
            <person name="Mohammed S."/>
        </authorList>
    </citation>
    <scope>PHOSPHORYLATION [LARGE SCALE ANALYSIS] AT SER-178</scope>
    <scope>IDENTIFICATION BY MASS SPECTROMETRY [LARGE SCALE ANALYSIS]</scope>
    <source>
        <tissue>Cervix carcinoma</tissue>
        <tissue>Erythroleukemia</tissue>
    </source>
</reference>
<reference key="11">
    <citation type="journal article" date="2021" name="Nucleic Acids Res.">
        <title>NOPCHAP1 is a PAQosome cofactor that helps loading NOP58 on RUVBL1/2 during box C/D snoRNP biogenesis.</title>
        <authorList>
            <person name="Abel Y."/>
            <person name="Paiva A.C.F."/>
            <person name="Bizarro J."/>
            <person name="Chagot M.E."/>
            <person name="Santo P.E."/>
            <person name="Robert M.C."/>
            <person name="Quinternet M."/>
            <person name="Vandermoere F."/>
            <person name="Sousa P.M.F."/>
            <person name="Fort P."/>
            <person name="Charpentier B."/>
            <person name="Manival X."/>
            <person name="Bandeiras T.M."/>
            <person name="Bertrand E."/>
            <person name="Verheggen C."/>
        </authorList>
    </citation>
    <scope>FUNCTION</scope>
    <scope>INTERACTION WITH RUVBL1; RUVBL2 AND NOP58</scope>
    <scope>SUBCELLULAR LOCATION</scope>
</reference>
<accession>Q8N5I9</accession>
<name>NOPC1_HUMAN</name>
<dbReference type="EMBL" id="AC090051">
    <property type="status" value="NOT_ANNOTATED_CDS"/>
    <property type="molecule type" value="Genomic_DNA"/>
</dbReference>
<dbReference type="EMBL" id="BC032326">
    <property type="protein sequence ID" value="AAH32326.1"/>
    <property type="status" value="ALT_FRAME"/>
    <property type="molecule type" value="mRNA"/>
</dbReference>
<dbReference type="CCDS" id="CCDS41825.1"/>
<dbReference type="RefSeq" id="NP_689531.2">
    <property type="nucleotide sequence ID" value="NM_152318.3"/>
</dbReference>
<dbReference type="SMR" id="Q8N5I9"/>
<dbReference type="BioGRID" id="125706">
    <property type="interactions" value="35"/>
</dbReference>
<dbReference type="FunCoup" id="Q8N5I9">
    <property type="interactions" value="1245"/>
</dbReference>
<dbReference type="IntAct" id="Q8N5I9">
    <property type="interactions" value="18"/>
</dbReference>
<dbReference type="STRING" id="9606.ENSP00000447057"/>
<dbReference type="iPTMnet" id="Q8N5I9"/>
<dbReference type="MetOSite" id="Q8N5I9"/>
<dbReference type="PhosphoSitePlus" id="Q8N5I9"/>
<dbReference type="BioMuta" id="C12orf45"/>
<dbReference type="DMDM" id="313104091"/>
<dbReference type="jPOST" id="Q8N5I9"/>
<dbReference type="MassIVE" id="Q8N5I9"/>
<dbReference type="PaxDb" id="9606-ENSP00000447057"/>
<dbReference type="PeptideAtlas" id="Q8N5I9"/>
<dbReference type="ProteomicsDB" id="72064"/>
<dbReference type="Pumba" id="Q8N5I9"/>
<dbReference type="Antibodypedia" id="48157">
    <property type="antibodies" value="18 antibodies from 9 providers"/>
</dbReference>
<dbReference type="DNASU" id="121053"/>
<dbReference type="Ensembl" id="ENST00000552951.7">
    <property type="protein sequence ID" value="ENSP00000447057.1"/>
    <property type="gene ID" value="ENSG00000151131.11"/>
</dbReference>
<dbReference type="GeneID" id="121053"/>
<dbReference type="KEGG" id="hsa:121053"/>
<dbReference type="MANE-Select" id="ENST00000552951.7">
    <property type="protein sequence ID" value="ENSP00000447057.1"/>
    <property type="RefSeq nucleotide sequence ID" value="NM_152318.3"/>
    <property type="RefSeq protein sequence ID" value="NP_689531.2"/>
</dbReference>
<dbReference type="UCSC" id="uc001tlb.4">
    <property type="organism name" value="human"/>
</dbReference>
<dbReference type="AGR" id="HGNC:28628"/>
<dbReference type="CTD" id="121053"/>
<dbReference type="DisGeNET" id="121053"/>
<dbReference type="GeneCards" id="NOPCHAP1"/>
<dbReference type="HGNC" id="HGNC:28628">
    <property type="gene designation" value="NOPCHAP1"/>
</dbReference>
<dbReference type="HPA" id="ENSG00000151131">
    <property type="expression patterns" value="Low tissue specificity"/>
</dbReference>
<dbReference type="neXtProt" id="NX_Q8N5I9"/>
<dbReference type="OpenTargets" id="ENSG00000151131"/>
<dbReference type="VEuPathDB" id="HostDB:ENSG00000151131"/>
<dbReference type="eggNOG" id="ENOG502S6C1">
    <property type="taxonomic scope" value="Eukaryota"/>
</dbReference>
<dbReference type="GeneTree" id="ENSGT00390000000376"/>
<dbReference type="HOGENOM" id="CLU_105671_0_0_1"/>
<dbReference type="InParanoid" id="Q8N5I9"/>
<dbReference type="OMA" id="HEFDIEH"/>
<dbReference type="OrthoDB" id="16908at9604"/>
<dbReference type="PAN-GO" id="Q8N5I9">
    <property type="GO annotations" value="2 GO annotations based on evolutionary models"/>
</dbReference>
<dbReference type="PhylomeDB" id="Q8N5I9"/>
<dbReference type="TreeFam" id="TF333191"/>
<dbReference type="PathwayCommons" id="Q8N5I9"/>
<dbReference type="SignaLink" id="Q8N5I9"/>
<dbReference type="BioGRID-ORCS" id="121053">
    <property type="hits" value="586 hits in 1130 CRISPR screens"/>
</dbReference>
<dbReference type="ChiTaRS" id="C12orf45">
    <property type="organism name" value="human"/>
</dbReference>
<dbReference type="GenomeRNAi" id="121053"/>
<dbReference type="Pharos" id="Q8N5I9">
    <property type="development level" value="Tdark"/>
</dbReference>
<dbReference type="PRO" id="PR:Q8N5I9"/>
<dbReference type="Proteomes" id="UP000005640">
    <property type="component" value="Chromosome 12"/>
</dbReference>
<dbReference type="RNAct" id="Q8N5I9">
    <property type="molecule type" value="protein"/>
</dbReference>
<dbReference type="Bgee" id="ENSG00000151131">
    <property type="expression patterns" value="Expressed in male germ line stem cell (sensu Vertebrata) in testis and 178 other cell types or tissues"/>
</dbReference>
<dbReference type="ExpressionAtlas" id="Q8N5I9">
    <property type="expression patterns" value="baseline and differential"/>
</dbReference>
<dbReference type="GO" id="GO:0005634">
    <property type="term" value="C:nucleus"/>
    <property type="evidence" value="ECO:0007669"/>
    <property type="project" value="UniProtKB-SubCell"/>
</dbReference>
<dbReference type="GO" id="GO:0062064">
    <property type="term" value="F:box C/D methylation guide snoRNP complex binding"/>
    <property type="evidence" value="ECO:0000314"/>
    <property type="project" value="UniProtKB"/>
</dbReference>
<dbReference type="GO" id="GO:0000492">
    <property type="term" value="P:box C/D snoRNP assembly"/>
    <property type="evidence" value="ECO:0000315"/>
    <property type="project" value="UniProtKB"/>
</dbReference>
<dbReference type="InterPro" id="IPR027921">
    <property type="entry name" value="NOPCHAP1"/>
</dbReference>
<dbReference type="PANTHER" id="PTHR28674:SF1">
    <property type="entry name" value="NOP PROTEIN CHAPERONE 1"/>
    <property type="match status" value="1"/>
</dbReference>
<dbReference type="PANTHER" id="PTHR28674">
    <property type="entry name" value="SIMILAR TO DNA SEGMENT, CHR 10, WAYNE STATE UNIVERSITY 102,-EXPRESSED"/>
    <property type="match status" value="1"/>
</dbReference>
<dbReference type="Pfam" id="PF15370">
    <property type="entry name" value="NOPCHAP1"/>
    <property type="match status" value="1"/>
</dbReference>
<protein>
    <recommendedName>
        <fullName evidence="3">NOP protein chaperone 1</fullName>
    </recommendedName>
</protein>
<organism>
    <name type="scientific">Homo sapiens</name>
    <name type="common">Human</name>
    <dbReference type="NCBI Taxonomy" id="9606"/>
    <lineage>
        <taxon>Eukaryota</taxon>
        <taxon>Metazoa</taxon>
        <taxon>Chordata</taxon>
        <taxon>Craniata</taxon>
        <taxon>Vertebrata</taxon>
        <taxon>Euteleostomi</taxon>
        <taxon>Mammalia</taxon>
        <taxon>Eutheria</taxon>
        <taxon>Euarchontoglires</taxon>
        <taxon>Primates</taxon>
        <taxon>Haplorrhini</taxon>
        <taxon>Catarrhini</taxon>
        <taxon>Hominidae</taxon>
        <taxon>Homo</taxon>
    </lineage>
</organism>
<keyword id="KW-0143">Chaperone</keyword>
<keyword id="KW-0539">Nucleus</keyword>
<keyword id="KW-0597">Phosphoprotein</keyword>
<keyword id="KW-1267">Proteomics identification</keyword>
<keyword id="KW-1185">Reference proteome</keyword>